<keyword id="KW-0963">Cytoplasm</keyword>
<keyword id="KW-0489">Methyltransferase</keyword>
<keyword id="KW-1185">Reference proteome</keyword>
<keyword id="KW-0949">S-adenosyl-L-methionine</keyword>
<keyword id="KW-0808">Transferase</keyword>
<keyword id="KW-0819">tRNA processing</keyword>
<feature type="chain" id="PRO_0000257423" description="tRNA (guanine-N(1)-)-methyltransferase">
    <location>
        <begin position="1"/>
        <end position="245"/>
    </location>
</feature>
<feature type="binding site" evidence="1">
    <location>
        <position position="112"/>
    </location>
    <ligand>
        <name>S-adenosyl-L-methionine</name>
        <dbReference type="ChEBI" id="CHEBI:59789"/>
    </ligand>
</feature>
<feature type="binding site" evidence="1">
    <location>
        <begin position="132"/>
        <end position="137"/>
    </location>
    <ligand>
        <name>S-adenosyl-L-methionine</name>
        <dbReference type="ChEBI" id="CHEBI:59789"/>
    </ligand>
</feature>
<dbReference type="EC" id="2.1.1.228" evidence="1"/>
<dbReference type="EMBL" id="CP000148">
    <property type="protein sequence ID" value="ABB33086.1"/>
    <property type="molecule type" value="Genomic_DNA"/>
</dbReference>
<dbReference type="RefSeq" id="WP_004514599.1">
    <property type="nucleotide sequence ID" value="NC_007517.1"/>
</dbReference>
<dbReference type="SMR" id="Q39RN8"/>
<dbReference type="STRING" id="269799.Gmet_2868"/>
<dbReference type="KEGG" id="gme:Gmet_2868"/>
<dbReference type="eggNOG" id="COG0336">
    <property type="taxonomic scope" value="Bacteria"/>
</dbReference>
<dbReference type="HOGENOM" id="CLU_047363_0_1_7"/>
<dbReference type="Proteomes" id="UP000007073">
    <property type="component" value="Chromosome"/>
</dbReference>
<dbReference type="GO" id="GO:0005829">
    <property type="term" value="C:cytosol"/>
    <property type="evidence" value="ECO:0007669"/>
    <property type="project" value="TreeGrafter"/>
</dbReference>
<dbReference type="GO" id="GO:0052906">
    <property type="term" value="F:tRNA (guanine(37)-N1)-methyltransferase activity"/>
    <property type="evidence" value="ECO:0007669"/>
    <property type="project" value="UniProtKB-UniRule"/>
</dbReference>
<dbReference type="GO" id="GO:0002939">
    <property type="term" value="P:tRNA N1-guanine methylation"/>
    <property type="evidence" value="ECO:0007669"/>
    <property type="project" value="TreeGrafter"/>
</dbReference>
<dbReference type="CDD" id="cd18080">
    <property type="entry name" value="TrmD-like"/>
    <property type="match status" value="1"/>
</dbReference>
<dbReference type="FunFam" id="1.10.1270.20:FF:000001">
    <property type="entry name" value="tRNA (guanine-N(1)-)-methyltransferase"/>
    <property type="match status" value="1"/>
</dbReference>
<dbReference type="FunFam" id="3.40.1280.10:FF:000001">
    <property type="entry name" value="tRNA (guanine-N(1)-)-methyltransferase"/>
    <property type="match status" value="1"/>
</dbReference>
<dbReference type="Gene3D" id="3.40.1280.10">
    <property type="match status" value="1"/>
</dbReference>
<dbReference type="Gene3D" id="1.10.1270.20">
    <property type="entry name" value="tRNA(m1g37)methyltransferase, domain 2"/>
    <property type="match status" value="1"/>
</dbReference>
<dbReference type="HAMAP" id="MF_00605">
    <property type="entry name" value="TrmD"/>
    <property type="match status" value="1"/>
</dbReference>
<dbReference type="InterPro" id="IPR029028">
    <property type="entry name" value="Alpha/beta_knot_MTases"/>
</dbReference>
<dbReference type="InterPro" id="IPR023148">
    <property type="entry name" value="tRNA_m1G_MeTrfase_C_sf"/>
</dbReference>
<dbReference type="InterPro" id="IPR002649">
    <property type="entry name" value="tRNA_m1G_MeTrfase_TrmD"/>
</dbReference>
<dbReference type="InterPro" id="IPR029026">
    <property type="entry name" value="tRNA_m1G_MTases_N"/>
</dbReference>
<dbReference type="InterPro" id="IPR016009">
    <property type="entry name" value="tRNA_MeTrfase_TRMD/TRM10"/>
</dbReference>
<dbReference type="NCBIfam" id="NF000648">
    <property type="entry name" value="PRK00026.1"/>
    <property type="match status" value="1"/>
</dbReference>
<dbReference type="NCBIfam" id="TIGR00088">
    <property type="entry name" value="trmD"/>
    <property type="match status" value="1"/>
</dbReference>
<dbReference type="PANTHER" id="PTHR46417">
    <property type="entry name" value="TRNA (GUANINE-N(1)-)-METHYLTRANSFERASE"/>
    <property type="match status" value="1"/>
</dbReference>
<dbReference type="PANTHER" id="PTHR46417:SF1">
    <property type="entry name" value="TRNA (GUANINE-N(1)-)-METHYLTRANSFERASE"/>
    <property type="match status" value="1"/>
</dbReference>
<dbReference type="Pfam" id="PF01746">
    <property type="entry name" value="tRNA_m1G_MT"/>
    <property type="match status" value="1"/>
</dbReference>
<dbReference type="PIRSF" id="PIRSF000386">
    <property type="entry name" value="tRNA_mtase"/>
    <property type="match status" value="1"/>
</dbReference>
<dbReference type="SUPFAM" id="SSF75217">
    <property type="entry name" value="alpha/beta knot"/>
    <property type="match status" value="1"/>
</dbReference>
<evidence type="ECO:0000255" key="1">
    <source>
        <dbReference type="HAMAP-Rule" id="MF_00605"/>
    </source>
</evidence>
<organism>
    <name type="scientific">Geobacter metallireducens (strain ATCC 53774 / DSM 7210 / GS-15)</name>
    <dbReference type="NCBI Taxonomy" id="269799"/>
    <lineage>
        <taxon>Bacteria</taxon>
        <taxon>Pseudomonadati</taxon>
        <taxon>Thermodesulfobacteriota</taxon>
        <taxon>Desulfuromonadia</taxon>
        <taxon>Geobacterales</taxon>
        <taxon>Geobacteraceae</taxon>
        <taxon>Geobacter</taxon>
    </lineage>
</organism>
<accession>Q39RN8</accession>
<gene>
    <name evidence="1" type="primary">trmD</name>
    <name type="ordered locus">Gmet_2868</name>
</gene>
<comment type="function">
    <text evidence="1">Specifically methylates guanosine-37 in various tRNAs.</text>
</comment>
<comment type="catalytic activity">
    <reaction evidence="1">
        <text>guanosine(37) in tRNA + S-adenosyl-L-methionine = N(1)-methylguanosine(37) in tRNA + S-adenosyl-L-homocysteine + H(+)</text>
        <dbReference type="Rhea" id="RHEA:36899"/>
        <dbReference type="Rhea" id="RHEA-COMP:10145"/>
        <dbReference type="Rhea" id="RHEA-COMP:10147"/>
        <dbReference type="ChEBI" id="CHEBI:15378"/>
        <dbReference type="ChEBI" id="CHEBI:57856"/>
        <dbReference type="ChEBI" id="CHEBI:59789"/>
        <dbReference type="ChEBI" id="CHEBI:73542"/>
        <dbReference type="ChEBI" id="CHEBI:74269"/>
        <dbReference type="EC" id="2.1.1.228"/>
    </reaction>
</comment>
<comment type="subunit">
    <text evidence="1">Homodimer.</text>
</comment>
<comment type="subcellular location">
    <subcellularLocation>
        <location evidence="1">Cytoplasm</location>
    </subcellularLocation>
</comment>
<comment type="similarity">
    <text evidence="1">Belongs to the RNA methyltransferase TrmD family.</text>
</comment>
<proteinExistence type="inferred from homology"/>
<reference key="1">
    <citation type="journal article" date="2009" name="BMC Microbiol.">
        <title>The genome sequence of Geobacter metallireducens: features of metabolism, physiology and regulation common and dissimilar to Geobacter sulfurreducens.</title>
        <authorList>
            <person name="Aklujkar M."/>
            <person name="Krushkal J."/>
            <person name="DiBartolo G."/>
            <person name="Lapidus A."/>
            <person name="Land M.L."/>
            <person name="Lovley D.R."/>
        </authorList>
    </citation>
    <scope>NUCLEOTIDE SEQUENCE [LARGE SCALE GENOMIC DNA]</scope>
    <source>
        <strain>ATCC 53774 / DSM 7210 / GS-15</strain>
    </source>
</reference>
<name>TRMD_GEOMG</name>
<protein>
    <recommendedName>
        <fullName evidence="1">tRNA (guanine-N(1)-)-methyltransferase</fullName>
        <ecNumber evidence="1">2.1.1.228</ecNumber>
    </recommendedName>
    <alternativeName>
        <fullName evidence="1">M1G-methyltransferase</fullName>
    </alternativeName>
    <alternativeName>
        <fullName evidence="1">tRNA [GM37] methyltransferase</fullName>
    </alternativeName>
</protein>
<sequence length="245" mass="27353">MKFDILTLFPAMFEGPLTESIIRRAVEKGLLDIRLHQIRDFATDRHKVVDDAPYGGGDGMVMKVEPIAACLEAVKAERPKARVLLTSPRGRLFDNAAARELAQEQEVIIICGRYEGIDERVRELFVEDEFSIGDFVLTGGELAAMVMIDATVRFVPGVLGSPGSAETDTFSDGLLEYPHYTRPAEFRGHSVPAVLLSGNHAEVARWRRRKALEETIRSRPDLLEKAVLDSDDRRYLLELEEGASK</sequence>